<reference key="1">
    <citation type="journal article" date="1990" name="Mol. Gen. Genet.">
        <title>Genes for the plastid elongation factor Tu and ribosomal protein S7 and six tRNA genes on the 73 kb DNA from Astasia longa that resembles the chloroplast DNA of Euglena.</title>
        <authorList>
            <person name="Siemeister G."/>
            <person name="Buchholz C."/>
            <person name="Hachtel W."/>
        </authorList>
    </citation>
    <scope>NUCLEOTIDE SEQUENCE [GENOMIC DNA]</scope>
    <source>
        <strain>CCAP 1204-17a</strain>
    </source>
</reference>
<reference key="2">
    <citation type="journal article" date="1994" name="Curr. Genet.">
        <title>Genes for components of the chloroplast translational apparatus are conserved in the reduced 73-kb plastid DNA of the nonphotosynthetic euglenoid flagellate Astasia longa.</title>
        <authorList>
            <person name="Gockel G."/>
            <person name="Hachtel W."/>
            <person name="Baier S."/>
            <person name="Fliss C."/>
            <person name="Henke M."/>
        </authorList>
    </citation>
    <scope>NUCLEOTIDE SEQUENCE [GENOMIC DNA]</scope>
    <source>
        <strain>CCAP 1204-17a</strain>
    </source>
</reference>
<reference key="3">
    <citation type="journal article" date="2000" name="Protist">
        <title>Complete gene map of the plastid genome of the nonphotosynthetic euglenoid flagellate Astasia longa.</title>
        <authorList>
            <person name="Gockel G."/>
            <person name="Hachtel W."/>
        </authorList>
    </citation>
    <scope>NUCLEOTIDE SEQUENCE [LARGE SCALE GENOMIC DNA]</scope>
    <source>
        <strain>CCAP 1204-17a</strain>
    </source>
</reference>
<organism>
    <name type="scientific">Euglena longa</name>
    <name type="common">Euglenophycean alga</name>
    <name type="synonym">Astasia longa</name>
    <dbReference type="NCBI Taxonomy" id="3037"/>
    <lineage>
        <taxon>Eukaryota</taxon>
        <taxon>Discoba</taxon>
        <taxon>Euglenozoa</taxon>
        <taxon>Euglenida</taxon>
        <taxon>Spirocuta</taxon>
        <taxon>Euglenophyceae</taxon>
        <taxon>Euglenales</taxon>
        <taxon>Euglenaceae</taxon>
        <taxon>Euglena</taxon>
    </lineage>
</organism>
<sequence length="456" mass="54396">MISFSLINFSNNLSWDKVTNLIFKLQKRLFKVSYVYDRKKLYVLQKIIVQLNYSRLLAIKLVNHSVFNENLPGVDGYVSLNFYESFELNEFLKYNWNNWIFQNLKKVSLFDNDGKIIVKKVPVISDRVWCYLVKFAIEPVHEALFHPFNLGYRSQYFIYEIQELILLNLSKFSFGSKKRVLKLDLSQNFCINNYSFLMEKLIAPRCIKLGIFKLLEKGFVLEFSNNCIFNKVDFSSLLLNIFLNGIEKLHNCIRYGYFLLFFLNPIDNEKELLSKIYLFLSKLDLKFNISEIELSSIINGFDFLGWHFKFSYKSYNNLCIFPSFDNYNKFLTRIKVIINNSNYGSIIKASKIYPIVKDWKEYHKYSDLFDLNYSLCFIKKRAFKIFKSESKQDFYSSKSLLLKCFSVFNIFNKDLKNLYNKFFKPLNFRHLVFLFNRGGEGFKYFYFCIHCGVILL</sequence>
<accession>P14761</accession>
<geneLocation type="non-photosynthetic plastid"/>
<keyword id="KW-0507">mRNA processing</keyword>
<keyword id="KW-0934">Plastid</keyword>
<proteinExistence type="predicted"/>
<dbReference type="EMBL" id="AJ294725">
    <property type="protein sequence ID" value="CAC24611.1"/>
    <property type="molecule type" value="Genomic_DNA"/>
</dbReference>
<dbReference type="PIR" id="S14924">
    <property type="entry name" value="S14924"/>
</dbReference>
<dbReference type="RefSeq" id="NP_075000.1">
    <property type="nucleotide sequence ID" value="NC_002652.1"/>
</dbReference>
<dbReference type="SMR" id="P14761"/>
<dbReference type="GeneID" id="802529"/>
<dbReference type="GO" id="GO:0009536">
    <property type="term" value="C:plastid"/>
    <property type="evidence" value="ECO:0007669"/>
    <property type="project" value="UniProtKB-SubCell"/>
</dbReference>
<dbReference type="GO" id="GO:0006397">
    <property type="term" value="P:mRNA processing"/>
    <property type="evidence" value="ECO:0007669"/>
    <property type="project" value="UniProtKB-KW"/>
</dbReference>
<dbReference type="InterPro" id="IPR025960">
    <property type="entry name" value="RVT_N"/>
</dbReference>
<dbReference type="Pfam" id="PF13655">
    <property type="entry name" value="RVT_N"/>
    <property type="match status" value="1"/>
</dbReference>
<comment type="function">
    <text>Could be required for group III intron excision.</text>
</comment>
<comment type="subcellular location">
    <subcellularLocation>
        <location>Plastid</location>
    </subcellularLocation>
</comment>
<comment type="similarity">
    <text evidence="1">To group II intron maturases.</text>
</comment>
<feature type="chain" id="PRO_0000217277" description="Maturase-like protein 1">
    <location>
        <begin position="1"/>
        <end position="456"/>
    </location>
</feature>
<evidence type="ECO:0000305" key="1"/>
<gene>
    <name type="primary">mat1</name>
    <name type="synonym">ycf13</name>
</gene>
<name>MAT1_EUGLO</name>
<protein>
    <recommendedName>
        <fullName>Maturase-like protein 1</fullName>
    </recommendedName>
</protein>